<protein>
    <recommendedName>
        <fullName evidence="1">2-succinyl-6-hydroxy-2,4-cyclohexadiene-1-carboxylate synthase</fullName>
        <shortName evidence="1">SHCHC synthase</shortName>
        <ecNumber evidence="1">4.2.99.20</ecNumber>
    </recommendedName>
</protein>
<name>MENH_SALEP</name>
<organism>
    <name type="scientific">Salmonella enteritidis PT4 (strain P125109)</name>
    <dbReference type="NCBI Taxonomy" id="550537"/>
    <lineage>
        <taxon>Bacteria</taxon>
        <taxon>Pseudomonadati</taxon>
        <taxon>Pseudomonadota</taxon>
        <taxon>Gammaproteobacteria</taxon>
        <taxon>Enterobacterales</taxon>
        <taxon>Enterobacteriaceae</taxon>
        <taxon>Salmonella</taxon>
    </lineage>
</organism>
<proteinExistence type="inferred from homology"/>
<comment type="function">
    <text evidence="1">Catalyzes a proton abstraction reaction that results in 2,5-elimination of pyruvate from 2-succinyl-5-enolpyruvyl-6-hydroxy-3-cyclohexene-1-carboxylate (SEPHCHC) and the formation of 2-succinyl-6-hydroxy-2,4-cyclohexadiene-1-carboxylate (SHCHC).</text>
</comment>
<comment type="catalytic activity">
    <reaction evidence="1">
        <text>5-enolpyruvoyl-6-hydroxy-2-succinyl-cyclohex-3-ene-1-carboxylate = (1R,6R)-6-hydroxy-2-succinyl-cyclohexa-2,4-diene-1-carboxylate + pyruvate</text>
        <dbReference type="Rhea" id="RHEA:25597"/>
        <dbReference type="ChEBI" id="CHEBI:15361"/>
        <dbReference type="ChEBI" id="CHEBI:58689"/>
        <dbReference type="ChEBI" id="CHEBI:58818"/>
        <dbReference type="EC" id="4.2.99.20"/>
    </reaction>
</comment>
<comment type="pathway">
    <text evidence="1">Quinol/quinone metabolism; 1,4-dihydroxy-2-naphthoate biosynthesis; 1,4-dihydroxy-2-naphthoate from chorismate: step 3/7.</text>
</comment>
<comment type="pathway">
    <text evidence="1">Quinol/quinone metabolism; menaquinone biosynthesis.</text>
</comment>
<comment type="subunit">
    <text evidence="1">Monomer.</text>
</comment>
<comment type="similarity">
    <text evidence="1">Belongs to the AB hydrolase superfamily. MenH family.</text>
</comment>
<feature type="chain" id="PRO_1000187116" description="2-succinyl-6-hydroxy-2,4-cyclohexadiene-1-carboxylate synthase">
    <location>
        <begin position="1"/>
        <end position="252"/>
    </location>
</feature>
<accession>B5R2Y9</accession>
<evidence type="ECO:0000255" key="1">
    <source>
        <dbReference type="HAMAP-Rule" id="MF_01660"/>
    </source>
</evidence>
<keyword id="KW-0456">Lyase</keyword>
<keyword id="KW-0474">Menaquinone biosynthesis</keyword>
<gene>
    <name evidence="1" type="primary">menH</name>
    <name type="ordered locus">SEN2290</name>
</gene>
<dbReference type="EC" id="4.2.99.20" evidence="1"/>
<dbReference type="EMBL" id="AM933172">
    <property type="protein sequence ID" value="CAR33874.1"/>
    <property type="molecule type" value="Genomic_DNA"/>
</dbReference>
<dbReference type="RefSeq" id="WP_000979132.1">
    <property type="nucleotide sequence ID" value="NC_011294.1"/>
</dbReference>
<dbReference type="SMR" id="B5R2Y9"/>
<dbReference type="ESTHER" id="salty-YFBB">
    <property type="family name" value="MenH_SHCHC"/>
</dbReference>
<dbReference type="KEGG" id="set:SEN2290"/>
<dbReference type="HOGENOM" id="CLU_020336_38_2_6"/>
<dbReference type="UniPathway" id="UPA00079"/>
<dbReference type="UniPathway" id="UPA01057">
    <property type="reaction ID" value="UER00900"/>
</dbReference>
<dbReference type="Proteomes" id="UP000000613">
    <property type="component" value="Chromosome"/>
</dbReference>
<dbReference type="GO" id="GO:0070205">
    <property type="term" value="F:2-succinyl-6-hydroxy-2,4-cyclohexadiene-1-carboxylate synthase activity"/>
    <property type="evidence" value="ECO:0007669"/>
    <property type="project" value="UniProtKB-UniRule"/>
</dbReference>
<dbReference type="GO" id="GO:0009234">
    <property type="term" value="P:menaquinone biosynthetic process"/>
    <property type="evidence" value="ECO:0007669"/>
    <property type="project" value="UniProtKB-UniRule"/>
</dbReference>
<dbReference type="Gene3D" id="3.40.50.1820">
    <property type="entry name" value="alpha/beta hydrolase"/>
    <property type="match status" value="1"/>
</dbReference>
<dbReference type="HAMAP" id="MF_01660">
    <property type="entry name" value="MenH"/>
    <property type="match status" value="1"/>
</dbReference>
<dbReference type="InterPro" id="IPR000073">
    <property type="entry name" value="AB_hydrolase_1"/>
</dbReference>
<dbReference type="InterPro" id="IPR029058">
    <property type="entry name" value="AB_hydrolase_fold"/>
</dbReference>
<dbReference type="InterPro" id="IPR022485">
    <property type="entry name" value="SHCHC_synthase_MenH"/>
</dbReference>
<dbReference type="NCBIfam" id="TIGR03695">
    <property type="entry name" value="menH_SHCHC"/>
    <property type="match status" value="1"/>
</dbReference>
<dbReference type="NCBIfam" id="NF008340">
    <property type="entry name" value="PRK11126.1"/>
    <property type="match status" value="1"/>
</dbReference>
<dbReference type="PANTHER" id="PTHR42916">
    <property type="entry name" value="2-SUCCINYL-5-ENOLPYRUVYL-6-HYDROXY-3-CYCLOHEXENE-1-CARBOXYLATE SYNTHASE"/>
    <property type="match status" value="1"/>
</dbReference>
<dbReference type="PANTHER" id="PTHR42916:SF1">
    <property type="entry name" value="PROTEIN PHYLLO, CHLOROPLASTIC"/>
    <property type="match status" value="1"/>
</dbReference>
<dbReference type="Pfam" id="PF12697">
    <property type="entry name" value="Abhydrolase_6"/>
    <property type="match status" value="1"/>
</dbReference>
<dbReference type="SUPFAM" id="SSF53474">
    <property type="entry name" value="alpha/beta-Hydrolases"/>
    <property type="match status" value="1"/>
</dbReference>
<reference key="1">
    <citation type="journal article" date="2008" name="Genome Res.">
        <title>Comparative genome analysis of Salmonella enteritidis PT4 and Salmonella gallinarum 287/91 provides insights into evolutionary and host adaptation pathways.</title>
        <authorList>
            <person name="Thomson N.R."/>
            <person name="Clayton D.J."/>
            <person name="Windhorst D."/>
            <person name="Vernikos G."/>
            <person name="Davidson S."/>
            <person name="Churcher C."/>
            <person name="Quail M.A."/>
            <person name="Stevens M."/>
            <person name="Jones M.A."/>
            <person name="Watson M."/>
            <person name="Barron A."/>
            <person name="Layton A."/>
            <person name="Pickard D."/>
            <person name="Kingsley R.A."/>
            <person name="Bignell A."/>
            <person name="Clark L."/>
            <person name="Harris B."/>
            <person name="Ormond D."/>
            <person name="Abdellah Z."/>
            <person name="Brooks K."/>
            <person name="Cherevach I."/>
            <person name="Chillingworth T."/>
            <person name="Woodward J."/>
            <person name="Norberczak H."/>
            <person name="Lord A."/>
            <person name="Arrowsmith C."/>
            <person name="Jagels K."/>
            <person name="Moule S."/>
            <person name="Mungall K."/>
            <person name="Saunders M."/>
            <person name="Whitehead S."/>
            <person name="Chabalgoity J.A."/>
            <person name="Maskell D."/>
            <person name="Humphreys T."/>
            <person name="Roberts M."/>
            <person name="Barrow P.A."/>
            <person name="Dougan G."/>
            <person name="Parkhill J."/>
        </authorList>
    </citation>
    <scope>NUCLEOTIDE SEQUENCE [LARGE SCALE GENOMIC DNA]</scope>
    <source>
        <strain>P125109</strain>
    </source>
</reference>
<sequence length="252" mass="27623">MMLHAQHMPGQPGAPSLVFLHGFSGDCREWQPVGEQFHGCSRLYIDLPGHGGSAAIPVGGFADVIRLLRATLISYNILKFWLVGYSLGGRVAMMAACQGIPGLCGLVVEGGHPGLQNEQARAERRLSDGRWAERFRHEPLTEVFHDWYQQPVFASLTAQQRQALTALRSQNNGETLAAMLEATSLAVQPDLREALNALAFPFYYLCGERDSKFRALAQEVAATCHVIRNAGHNAHRENPAGVVDSLAQILRL</sequence>